<proteinExistence type="inferred from homology"/>
<protein>
    <recommendedName>
        <fullName evidence="1">Phosphopantetheine adenylyltransferase</fullName>
        <ecNumber evidence="1">2.7.7.3</ecNumber>
    </recommendedName>
    <alternativeName>
        <fullName evidence="1">Dephospho-CoA pyrophosphorylase</fullName>
    </alternativeName>
    <alternativeName>
        <fullName evidence="1">Pantetheine-phosphate adenylyltransferase</fullName>
        <shortName evidence="1">PPAT</shortName>
    </alternativeName>
</protein>
<keyword id="KW-0067">ATP-binding</keyword>
<keyword id="KW-0173">Coenzyme A biosynthesis</keyword>
<keyword id="KW-0963">Cytoplasm</keyword>
<keyword id="KW-0460">Magnesium</keyword>
<keyword id="KW-0547">Nucleotide-binding</keyword>
<keyword id="KW-0548">Nucleotidyltransferase</keyword>
<keyword id="KW-1185">Reference proteome</keyword>
<keyword id="KW-0808">Transferase</keyword>
<sequence length="165" mass="18048">MRVALYPGTFDPITLGHVDIIRRAAALVDKLVIGVAINRDKGPLFTLEERVAMIEAECAALSAETGTEIVAHPFENLLIDCARDVGAQIIVRGLRAVADFEYEFQMVGMNRALDDSVETVFLMADARRQAIASKLVKEIARLGGDVSKFVPPRVNDALKERLGRA</sequence>
<accession>Q5LRC9</accession>
<gene>
    <name evidence="1" type="primary">coaD</name>
    <name type="ordered locus">SPO2200</name>
</gene>
<comment type="function">
    <text evidence="1">Reversibly transfers an adenylyl group from ATP to 4'-phosphopantetheine, yielding dephospho-CoA (dPCoA) and pyrophosphate.</text>
</comment>
<comment type="catalytic activity">
    <reaction evidence="1">
        <text>(R)-4'-phosphopantetheine + ATP + H(+) = 3'-dephospho-CoA + diphosphate</text>
        <dbReference type="Rhea" id="RHEA:19801"/>
        <dbReference type="ChEBI" id="CHEBI:15378"/>
        <dbReference type="ChEBI" id="CHEBI:30616"/>
        <dbReference type="ChEBI" id="CHEBI:33019"/>
        <dbReference type="ChEBI" id="CHEBI:57328"/>
        <dbReference type="ChEBI" id="CHEBI:61723"/>
        <dbReference type="EC" id="2.7.7.3"/>
    </reaction>
</comment>
<comment type="cofactor">
    <cofactor evidence="1">
        <name>Mg(2+)</name>
        <dbReference type="ChEBI" id="CHEBI:18420"/>
    </cofactor>
</comment>
<comment type="pathway">
    <text evidence="1">Cofactor biosynthesis; coenzyme A biosynthesis; CoA from (R)-pantothenate: step 4/5.</text>
</comment>
<comment type="subunit">
    <text evidence="1">Homohexamer.</text>
</comment>
<comment type="subcellular location">
    <subcellularLocation>
        <location evidence="1">Cytoplasm</location>
    </subcellularLocation>
</comment>
<comment type="similarity">
    <text evidence="1">Belongs to the bacterial CoaD family.</text>
</comment>
<dbReference type="EC" id="2.7.7.3" evidence="1"/>
<dbReference type="EMBL" id="CP000031">
    <property type="protein sequence ID" value="AAV95466.1"/>
    <property type="molecule type" value="Genomic_DNA"/>
</dbReference>
<dbReference type="RefSeq" id="WP_011047922.1">
    <property type="nucleotide sequence ID" value="NC_003911.12"/>
</dbReference>
<dbReference type="SMR" id="Q5LRC9"/>
<dbReference type="STRING" id="246200.SPO2200"/>
<dbReference type="PaxDb" id="246200-SPO2200"/>
<dbReference type="KEGG" id="sil:SPO2200"/>
<dbReference type="eggNOG" id="COG0669">
    <property type="taxonomic scope" value="Bacteria"/>
</dbReference>
<dbReference type="HOGENOM" id="CLU_100149_0_1_5"/>
<dbReference type="OrthoDB" id="9806661at2"/>
<dbReference type="UniPathway" id="UPA00241">
    <property type="reaction ID" value="UER00355"/>
</dbReference>
<dbReference type="Proteomes" id="UP000001023">
    <property type="component" value="Chromosome"/>
</dbReference>
<dbReference type="GO" id="GO:0005737">
    <property type="term" value="C:cytoplasm"/>
    <property type="evidence" value="ECO:0007669"/>
    <property type="project" value="UniProtKB-SubCell"/>
</dbReference>
<dbReference type="GO" id="GO:0005524">
    <property type="term" value="F:ATP binding"/>
    <property type="evidence" value="ECO:0007669"/>
    <property type="project" value="UniProtKB-KW"/>
</dbReference>
<dbReference type="GO" id="GO:0004595">
    <property type="term" value="F:pantetheine-phosphate adenylyltransferase activity"/>
    <property type="evidence" value="ECO:0007669"/>
    <property type="project" value="UniProtKB-UniRule"/>
</dbReference>
<dbReference type="GO" id="GO:0015937">
    <property type="term" value="P:coenzyme A biosynthetic process"/>
    <property type="evidence" value="ECO:0007669"/>
    <property type="project" value="UniProtKB-UniRule"/>
</dbReference>
<dbReference type="CDD" id="cd02163">
    <property type="entry name" value="PPAT"/>
    <property type="match status" value="1"/>
</dbReference>
<dbReference type="Gene3D" id="3.40.50.620">
    <property type="entry name" value="HUPs"/>
    <property type="match status" value="1"/>
</dbReference>
<dbReference type="HAMAP" id="MF_00151">
    <property type="entry name" value="PPAT_bact"/>
    <property type="match status" value="1"/>
</dbReference>
<dbReference type="InterPro" id="IPR004821">
    <property type="entry name" value="Cyt_trans-like"/>
</dbReference>
<dbReference type="InterPro" id="IPR001980">
    <property type="entry name" value="PPAT"/>
</dbReference>
<dbReference type="InterPro" id="IPR014729">
    <property type="entry name" value="Rossmann-like_a/b/a_fold"/>
</dbReference>
<dbReference type="NCBIfam" id="TIGR01510">
    <property type="entry name" value="coaD_prev_kdtB"/>
    <property type="match status" value="1"/>
</dbReference>
<dbReference type="NCBIfam" id="TIGR00125">
    <property type="entry name" value="cyt_tran_rel"/>
    <property type="match status" value="1"/>
</dbReference>
<dbReference type="PANTHER" id="PTHR21342">
    <property type="entry name" value="PHOSPHOPANTETHEINE ADENYLYLTRANSFERASE"/>
    <property type="match status" value="1"/>
</dbReference>
<dbReference type="PANTHER" id="PTHR21342:SF1">
    <property type="entry name" value="PHOSPHOPANTETHEINE ADENYLYLTRANSFERASE"/>
    <property type="match status" value="1"/>
</dbReference>
<dbReference type="Pfam" id="PF01467">
    <property type="entry name" value="CTP_transf_like"/>
    <property type="match status" value="1"/>
</dbReference>
<dbReference type="PRINTS" id="PR01020">
    <property type="entry name" value="LPSBIOSNTHSS"/>
</dbReference>
<dbReference type="SUPFAM" id="SSF52374">
    <property type="entry name" value="Nucleotidylyl transferase"/>
    <property type="match status" value="1"/>
</dbReference>
<reference key="1">
    <citation type="journal article" date="2004" name="Nature">
        <title>Genome sequence of Silicibacter pomeroyi reveals adaptations to the marine environment.</title>
        <authorList>
            <person name="Moran M.A."/>
            <person name="Buchan A."/>
            <person name="Gonzalez J.M."/>
            <person name="Heidelberg J.F."/>
            <person name="Whitman W.B."/>
            <person name="Kiene R.P."/>
            <person name="Henriksen J.R."/>
            <person name="King G.M."/>
            <person name="Belas R."/>
            <person name="Fuqua C."/>
            <person name="Brinkac L.M."/>
            <person name="Lewis M."/>
            <person name="Johri S."/>
            <person name="Weaver B."/>
            <person name="Pai G."/>
            <person name="Eisen J.A."/>
            <person name="Rahe E."/>
            <person name="Sheldon W.M."/>
            <person name="Ye W."/>
            <person name="Miller T.R."/>
            <person name="Carlton J."/>
            <person name="Rasko D.A."/>
            <person name="Paulsen I.T."/>
            <person name="Ren Q."/>
            <person name="Daugherty S.C."/>
            <person name="DeBoy R.T."/>
            <person name="Dodson R.J."/>
            <person name="Durkin A.S."/>
            <person name="Madupu R."/>
            <person name="Nelson W.C."/>
            <person name="Sullivan S.A."/>
            <person name="Rosovitz M.J."/>
            <person name="Haft D.H."/>
            <person name="Selengut J."/>
            <person name="Ward N."/>
        </authorList>
    </citation>
    <scope>NUCLEOTIDE SEQUENCE [LARGE SCALE GENOMIC DNA]</scope>
    <source>
        <strain>ATCC 700808 / DSM 15171 / DSS-3</strain>
    </source>
</reference>
<reference key="2">
    <citation type="journal article" date="2014" name="Stand. Genomic Sci.">
        <title>An updated genome annotation for the model marine bacterium Ruegeria pomeroyi DSS-3.</title>
        <authorList>
            <person name="Rivers A.R."/>
            <person name="Smith C.B."/>
            <person name="Moran M.A."/>
        </authorList>
    </citation>
    <scope>GENOME REANNOTATION</scope>
    <source>
        <strain>ATCC 700808 / DSM 15171 / DSS-3</strain>
    </source>
</reference>
<organism>
    <name type="scientific">Ruegeria pomeroyi (strain ATCC 700808 / DSM 15171 / DSS-3)</name>
    <name type="common">Silicibacter pomeroyi</name>
    <dbReference type="NCBI Taxonomy" id="246200"/>
    <lineage>
        <taxon>Bacteria</taxon>
        <taxon>Pseudomonadati</taxon>
        <taxon>Pseudomonadota</taxon>
        <taxon>Alphaproteobacteria</taxon>
        <taxon>Rhodobacterales</taxon>
        <taxon>Roseobacteraceae</taxon>
        <taxon>Ruegeria</taxon>
    </lineage>
</organism>
<evidence type="ECO:0000255" key="1">
    <source>
        <dbReference type="HAMAP-Rule" id="MF_00151"/>
    </source>
</evidence>
<feature type="chain" id="PRO_1000076790" description="Phosphopantetheine adenylyltransferase">
    <location>
        <begin position="1"/>
        <end position="165"/>
    </location>
</feature>
<feature type="binding site" evidence="1">
    <location>
        <begin position="9"/>
        <end position="10"/>
    </location>
    <ligand>
        <name>ATP</name>
        <dbReference type="ChEBI" id="CHEBI:30616"/>
    </ligand>
</feature>
<feature type="binding site" evidence="1">
    <location>
        <position position="9"/>
    </location>
    <ligand>
        <name>substrate</name>
    </ligand>
</feature>
<feature type="binding site" evidence="1">
    <location>
        <position position="17"/>
    </location>
    <ligand>
        <name>ATP</name>
        <dbReference type="ChEBI" id="CHEBI:30616"/>
    </ligand>
</feature>
<feature type="binding site" evidence="1">
    <location>
        <position position="41"/>
    </location>
    <ligand>
        <name>substrate</name>
    </ligand>
</feature>
<feature type="binding site" evidence="1">
    <location>
        <position position="78"/>
    </location>
    <ligand>
        <name>substrate</name>
    </ligand>
</feature>
<feature type="binding site" evidence="1">
    <location>
        <position position="92"/>
    </location>
    <ligand>
        <name>substrate</name>
    </ligand>
</feature>
<feature type="binding site" evidence="1">
    <location>
        <begin position="93"/>
        <end position="95"/>
    </location>
    <ligand>
        <name>ATP</name>
        <dbReference type="ChEBI" id="CHEBI:30616"/>
    </ligand>
</feature>
<feature type="binding site" evidence="1">
    <location>
        <position position="103"/>
    </location>
    <ligand>
        <name>ATP</name>
        <dbReference type="ChEBI" id="CHEBI:30616"/>
    </ligand>
</feature>
<feature type="binding site" evidence="1">
    <location>
        <begin position="128"/>
        <end position="134"/>
    </location>
    <ligand>
        <name>ATP</name>
        <dbReference type="ChEBI" id="CHEBI:30616"/>
    </ligand>
</feature>
<feature type="site" description="Transition state stabilizer" evidence="1">
    <location>
        <position position="17"/>
    </location>
</feature>
<name>COAD_RUEPO</name>